<proteinExistence type="evidence at protein level"/>
<feature type="initiator methionine" description="Removed" evidence="3">
    <location>
        <position position="1"/>
    </location>
</feature>
<feature type="chain" id="PRO_0000199985" description="Gas vesicle protein A">
    <location>
        <begin position="2"/>
        <end position="71"/>
    </location>
</feature>
<feature type="region of interest" description="Alpha helix 1" evidence="1">
    <location>
        <begin position="12"/>
        <end position="22"/>
    </location>
</feature>
<feature type="region of interest" description="Beta-strand 1" evidence="1">
    <location>
        <begin position="26"/>
        <end position="34"/>
    </location>
</feature>
<feature type="region of interest" description="Beta turn" evidence="1">
    <location>
        <begin position="35"/>
        <end position="37"/>
    </location>
</feature>
<feature type="region of interest" description="Beta-strand 2" evidence="1">
    <location>
        <begin position="38"/>
        <end position="46"/>
    </location>
</feature>
<feature type="region of interest" description="Alpha helix 2" evidence="1">
    <location>
        <begin position="51"/>
        <end position="70"/>
    </location>
</feature>
<organism>
    <name type="scientific">Microcystis sp. (strain BC 84/1)</name>
    <dbReference type="NCBI Taxonomy" id="1128"/>
    <lineage>
        <taxon>Bacteria</taxon>
        <taxon>Bacillati</taxon>
        <taxon>Cyanobacteriota</taxon>
        <taxon>Cyanophyceae</taxon>
        <taxon>Oscillatoriophycideae</taxon>
        <taxon>Chroococcales</taxon>
        <taxon>Microcystaceae</taxon>
        <taxon>Microcystis</taxon>
    </lineage>
</organism>
<dbReference type="GO" id="GO:0033172">
    <property type="term" value="C:gas vesicle shell"/>
    <property type="evidence" value="ECO:0007669"/>
    <property type="project" value="UniProtKB-UniRule"/>
</dbReference>
<dbReference type="GO" id="GO:0012506">
    <property type="term" value="C:vesicle membrane"/>
    <property type="evidence" value="ECO:0007669"/>
    <property type="project" value="InterPro"/>
</dbReference>
<dbReference type="GO" id="GO:0005198">
    <property type="term" value="F:structural molecule activity"/>
    <property type="evidence" value="ECO:0007669"/>
    <property type="project" value="InterPro"/>
</dbReference>
<dbReference type="HAMAP" id="MF_00576">
    <property type="entry name" value="Gas_vesicle_A"/>
    <property type="match status" value="1"/>
</dbReference>
<dbReference type="InterPro" id="IPR000638">
    <property type="entry name" value="Gas-vesicle_GvpA-like"/>
</dbReference>
<dbReference type="InterPro" id="IPR047870">
    <property type="entry name" value="Gas_vesicle_GvpA"/>
</dbReference>
<dbReference type="InterPro" id="IPR050530">
    <property type="entry name" value="GvpA"/>
</dbReference>
<dbReference type="InterPro" id="IPR018493">
    <property type="entry name" value="GvpA-like_CS"/>
</dbReference>
<dbReference type="NCBIfam" id="NF006874">
    <property type="entry name" value="PRK09371.1"/>
    <property type="match status" value="1"/>
</dbReference>
<dbReference type="PANTHER" id="PTHR35344:SF4">
    <property type="entry name" value="GAS VESICLE PROTEIN A1"/>
    <property type="match status" value="1"/>
</dbReference>
<dbReference type="PANTHER" id="PTHR35344">
    <property type="entry name" value="GAS VESICLE STRUCTURAL PROTEIN 2-RELATED"/>
    <property type="match status" value="1"/>
</dbReference>
<dbReference type="Pfam" id="PF00741">
    <property type="entry name" value="Gas_vesicle"/>
    <property type="match status" value="1"/>
</dbReference>
<dbReference type="PROSITE" id="PS00234">
    <property type="entry name" value="GAS_VESICLE_A_1"/>
    <property type="match status" value="1"/>
</dbReference>
<dbReference type="PROSITE" id="PS00669">
    <property type="entry name" value="GAS_VESICLE_A_2"/>
    <property type="match status" value="1"/>
</dbReference>
<gene>
    <name evidence="2 5" type="primary">gvpA</name>
</gene>
<keyword id="KW-0903">Direct protein sequencing</keyword>
<keyword id="KW-0304">Gas vesicle</keyword>
<sequence length="71" mass="7578">MAVEKTNSSSSLAEVIDRILDKGIVIDAWARVSLVGIELLAIEARVVIASVETYLKYAEAVGLTQXAXXAX</sequence>
<protein>
    <recommendedName>
        <fullName evidence="2">Gas vesicle protein A</fullName>
        <shortName evidence="2">GvpA</shortName>
    </recommendedName>
    <alternativeName>
        <fullName evidence="4">Gas vesicle structural protein</fullName>
    </alternativeName>
</protein>
<evidence type="ECO:0000250" key="1">
    <source>
        <dbReference type="UniProtKB" id="P08958"/>
    </source>
</evidence>
<evidence type="ECO:0000255" key="2">
    <source>
        <dbReference type="HAMAP-Rule" id="MF_00576"/>
    </source>
</evidence>
<evidence type="ECO:0000269" key="3">
    <source>
    </source>
</evidence>
<evidence type="ECO:0000303" key="4">
    <source>
    </source>
</evidence>
<evidence type="ECO:0000305" key="5"/>
<name>GVPA_MICBC</name>
<reference key="1">
    <citation type="journal article" date="1986" name="Biochem. J.">
        <title>Complete amino acid sequence of cyanobacterial gas-vesicle protein indicates a 70-residue molecule that corresponds in size to the crystallographic unit cell.</title>
        <authorList>
            <person name="Hayes P.K."/>
            <person name="Walsby A.E."/>
            <person name="Walker J.E."/>
        </authorList>
    </citation>
    <scope>PROTEIN SEQUENCE OF 2-71</scope>
    <scope>SUBCELLULAR LOCATION</scope>
    <source>
        <strain>BC 84/1</strain>
    </source>
</reference>
<accession>P08412</accession>
<comment type="function">
    <text evidence="2">Gas vesicles are hollow, gas filled proteinaceous nanostructures found in some microorganisms. During planktonic growth they allow positioning of the organism at a favorable depth for light or nutrient acquisition. GvpA forms the protein shell.</text>
</comment>
<comment type="subunit">
    <text evidence="2">The gas vesicle shell is 2 nm thick and consists of a single layer of this protein. It forms helical ribs nearly perpendicular to the long axis of the vesicle.</text>
</comment>
<comment type="subcellular location">
    <subcellularLocation>
        <location evidence="2 3">Gas vesicle shell</location>
    </subcellularLocation>
</comment>
<comment type="similarity">
    <text evidence="2">Belongs to the gas vesicle GvpA family.</text>
</comment>